<keyword id="KW-0963">Cytoplasm</keyword>
<keyword id="KW-0324">Glycolysis</keyword>
<keyword id="KW-0520">NAD</keyword>
<keyword id="KW-0547">Nucleotide-binding</keyword>
<keyword id="KW-0560">Oxidoreductase</keyword>
<proteinExistence type="inferred from homology"/>
<dbReference type="EC" id="1.2.1.12" evidence="2"/>
<dbReference type="EMBL" id="AE015929">
    <property type="protein sequence ID" value="AAO04960.1"/>
    <property type="molecule type" value="Genomic_DNA"/>
</dbReference>
<dbReference type="RefSeq" id="NP_764916.1">
    <property type="nucleotide sequence ID" value="NC_004461.1"/>
</dbReference>
<dbReference type="SMR" id="Q8CNY0"/>
<dbReference type="KEGG" id="sep:SE_1361"/>
<dbReference type="PATRIC" id="fig|176280.10.peg.1330"/>
<dbReference type="eggNOG" id="COG0057">
    <property type="taxonomic scope" value="Bacteria"/>
</dbReference>
<dbReference type="HOGENOM" id="CLU_030140_0_2_9"/>
<dbReference type="OrthoDB" id="9803304at2"/>
<dbReference type="UniPathway" id="UPA00109">
    <property type="reaction ID" value="UER00184"/>
</dbReference>
<dbReference type="Proteomes" id="UP000001411">
    <property type="component" value="Chromosome"/>
</dbReference>
<dbReference type="GO" id="GO:0005737">
    <property type="term" value="C:cytoplasm"/>
    <property type="evidence" value="ECO:0007669"/>
    <property type="project" value="UniProtKB-SubCell"/>
</dbReference>
<dbReference type="GO" id="GO:0004365">
    <property type="term" value="F:glyceraldehyde-3-phosphate dehydrogenase (NAD+) (phosphorylating) activity"/>
    <property type="evidence" value="ECO:0000250"/>
    <property type="project" value="UniProtKB"/>
</dbReference>
<dbReference type="GO" id="GO:0051287">
    <property type="term" value="F:NAD binding"/>
    <property type="evidence" value="ECO:0000250"/>
    <property type="project" value="UniProtKB"/>
</dbReference>
<dbReference type="GO" id="GO:0050661">
    <property type="term" value="F:NADP binding"/>
    <property type="evidence" value="ECO:0007669"/>
    <property type="project" value="InterPro"/>
</dbReference>
<dbReference type="GO" id="GO:0006006">
    <property type="term" value="P:glucose metabolic process"/>
    <property type="evidence" value="ECO:0007669"/>
    <property type="project" value="InterPro"/>
</dbReference>
<dbReference type="GO" id="GO:0006096">
    <property type="term" value="P:glycolytic process"/>
    <property type="evidence" value="ECO:0007669"/>
    <property type="project" value="UniProtKB-UniPathway"/>
</dbReference>
<dbReference type="CDD" id="cd18126">
    <property type="entry name" value="GAPDH_I_C"/>
    <property type="match status" value="1"/>
</dbReference>
<dbReference type="CDD" id="cd05214">
    <property type="entry name" value="GAPDH_I_N"/>
    <property type="match status" value="1"/>
</dbReference>
<dbReference type="FunFam" id="3.30.360.10:FF:000002">
    <property type="entry name" value="Glyceraldehyde-3-phosphate dehydrogenase"/>
    <property type="match status" value="1"/>
</dbReference>
<dbReference type="FunFam" id="3.40.50.720:FF:000001">
    <property type="entry name" value="Glyceraldehyde-3-phosphate dehydrogenase"/>
    <property type="match status" value="1"/>
</dbReference>
<dbReference type="Gene3D" id="3.30.360.10">
    <property type="entry name" value="Dihydrodipicolinate Reductase, domain 2"/>
    <property type="match status" value="1"/>
</dbReference>
<dbReference type="Gene3D" id="3.40.50.720">
    <property type="entry name" value="NAD(P)-binding Rossmann-like Domain"/>
    <property type="match status" value="1"/>
</dbReference>
<dbReference type="InterPro" id="IPR020831">
    <property type="entry name" value="GlycerAld/Erythrose_P_DH"/>
</dbReference>
<dbReference type="InterPro" id="IPR020830">
    <property type="entry name" value="GlycerAld_3-P_DH_AS"/>
</dbReference>
<dbReference type="InterPro" id="IPR020829">
    <property type="entry name" value="GlycerAld_3-P_DH_cat"/>
</dbReference>
<dbReference type="InterPro" id="IPR020828">
    <property type="entry name" value="GlycerAld_3-P_DH_NAD(P)-bd"/>
</dbReference>
<dbReference type="InterPro" id="IPR006424">
    <property type="entry name" value="Glyceraldehyde-3-P_DH_1"/>
</dbReference>
<dbReference type="InterPro" id="IPR036291">
    <property type="entry name" value="NAD(P)-bd_dom_sf"/>
</dbReference>
<dbReference type="NCBIfam" id="TIGR01534">
    <property type="entry name" value="GAPDH-I"/>
    <property type="match status" value="1"/>
</dbReference>
<dbReference type="PANTHER" id="PTHR43148">
    <property type="entry name" value="GLYCERALDEHYDE-3-PHOSPHATE DEHYDROGENASE 2"/>
    <property type="match status" value="1"/>
</dbReference>
<dbReference type="Pfam" id="PF02800">
    <property type="entry name" value="Gp_dh_C"/>
    <property type="match status" value="1"/>
</dbReference>
<dbReference type="Pfam" id="PF00044">
    <property type="entry name" value="Gp_dh_N"/>
    <property type="match status" value="1"/>
</dbReference>
<dbReference type="PIRSF" id="PIRSF000149">
    <property type="entry name" value="GAP_DH"/>
    <property type="match status" value="1"/>
</dbReference>
<dbReference type="PRINTS" id="PR00078">
    <property type="entry name" value="G3PDHDRGNASE"/>
</dbReference>
<dbReference type="SMART" id="SM00846">
    <property type="entry name" value="Gp_dh_N"/>
    <property type="match status" value="1"/>
</dbReference>
<dbReference type="SUPFAM" id="SSF55347">
    <property type="entry name" value="Glyceraldehyde-3-phosphate dehydrogenase-like, C-terminal domain"/>
    <property type="match status" value="1"/>
</dbReference>
<dbReference type="SUPFAM" id="SSF51735">
    <property type="entry name" value="NAD(P)-binding Rossmann-fold domains"/>
    <property type="match status" value="1"/>
</dbReference>
<dbReference type="PROSITE" id="PS00071">
    <property type="entry name" value="GAPDH"/>
    <property type="match status" value="1"/>
</dbReference>
<evidence type="ECO:0000250" key="1">
    <source>
        <dbReference type="UniProtKB" id="P00362"/>
    </source>
</evidence>
<evidence type="ECO:0000250" key="2">
    <source>
        <dbReference type="UniProtKB" id="Q6GIL8"/>
    </source>
</evidence>
<evidence type="ECO:0000305" key="3"/>
<feature type="chain" id="PRO_0000145697" description="Glyceraldehyde-3-phosphate dehydrogenase 2">
    <location>
        <begin position="1"/>
        <end position="341"/>
    </location>
</feature>
<feature type="active site" description="Nucleophile" evidence="2">
    <location>
        <position position="153"/>
    </location>
</feature>
<feature type="binding site" evidence="2">
    <location>
        <begin position="12"/>
        <end position="13"/>
    </location>
    <ligand>
        <name>NAD(+)</name>
        <dbReference type="ChEBI" id="CHEBI:57540"/>
    </ligand>
</feature>
<feature type="binding site" evidence="2">
    <location>
        <position position="78"/>
    </location>
    <ligand>
        <name>NAD(+)</name>
        <dbReference type="ChEBI" id="CHEBI:57540"/>
    </ligand>
</feature>
<feature type="binding site" evidence="2">
    <location>
        <position position="120"/>
    </location>
    <ligand>
        <name>NAD(+)</name>
        <dbReference type="ChEBI" id="CHEBI:57540"/>
    </ligand>
</feature>
<feature type="binding site" evidence="2">
    <location>
        <begin position="152"/>
        <end position="154"/>
    </location>
    <ligand>
        <name>D-glyceraldehyde 3-phosphate</name>
        <dbReference type="ChEBI" id="CHEBI:59776"/>
    </ligand>
</feature>
<feature type="binding site" evidence="2">
    <location>
        <position position="183"/>
    </location>
    <ligand>
        <name>D-glyceraldehyde 3-phosphate</name>
        <dbReference type="ChEBI" id="CHEBI:59776"/>
    </ligand>
</feature>
<feature type="binding site" evidence="2">
    <location>
        <position position="184"/>
    </location>
    <ligand>
        <name>NAD(+)</name>
        <dbReference type="ChEBI" id="CHEBI:57540"/>
    </ligand>
</feature>
<feature type="binding site" evidence="1">
    <location>
        <position position="198"/>
    </location>
    <ligand>
        <name>D-glyceraldehyde 3-phosphate</name>
        <dbReference type="ChEBI" id="CHEBI:59776"/>
    </ligand>
</feature>
<feature type="binding site" evidence="2">
    <location>
        <begin position="211"/>
        <end position="212"/>
    </location>
    <ligand>
        <name>D-glyceraldehyde 3-phosphate</name>
        <dbReference type="ChEBI" id="CHEBI:59776"/>
    </ligand>
</feature>
<feature type="binding site" evidence="2">
    <location>
        <position position="234"/>
    </location>
    <ligand>
        <name>D-glyceraldehyde 3-phosphate</name>
        <dbReference type="ChEBI" id="CHEBI:59776"/>
    </ligand>
</feature>
<feature type="binding site" evidence="2">
    <location>
        <position position="313"/>
    </location>
    <ligand>
        <name>NAD(+)</name>
        <dbReference type="ChEBI" id="CHEBI:57540"/>
    </ligand>
</feature>
<feature type="site" description="Activates thiol group during catalysis" evidence="2">
    <location>
        <position position="180"/>
    </location>
</feature>
<name>G3P2_STAES</name>
<organism>
    <name type="scientific">Staphylococcus epidermidis (strain ATCC 12228 / FDA PCI 1200)</name>
    <dbReference type="NCBI Taxonomy" id="176280"/>
    <lineage>
        <taxon>Bacteria</taxon>
        <taxon>Bacillati</taxon>
        <taxon>Bacillota</taxon>
        <taxon>Bacilli</taxon>
        <taxon>Bacillales</taxon>
        <taxon>Staphylococcaceae</taxon>
        <taxon>Staphylococcus</taxon>
    </lineage>
</organism>
<protein>
    <recommendedName>
        <fullName evidence="2">Glyceraldehyde-3-phosphate dehydrogenase 2</fullName>
        <shortName evidence="2">GAPDH 2</shortName>
        <ecNumber evidence="2">1.2.1.12</ecNumber>
    </recommendedName>
    <alternativeName>
        <fullName evidence="2">NAD-dependent glyceraldehyde-3-phosphate dehydrogenase</fullName>
    </alternativeName>
</protein>
<reference key="1">
    <citation type="journal article" date="2003" name="Mol. Microbiol.">
        <title>Genome-based analysis of virulence genes in a non-biofilm-forming Staphylococcus epidermidis strain (ATCC 12228).</title>
        <authorList>
            <person name="Zhang Y.-Q."/>
            <person name="Ren S.-X."/>
            <person name="Li H.-L."/>
            <person name="Wang Y.-X."/>
            <person name="Fu G."/>
            <person name="Yang J."/>
            <person name="Qin Z.-Q."/>
            <person name="Miao Y.-G."/>
            <person name="Wang W.-Y."/>
            <person name="Chen R.-S."/>
            <person name="Shen Y."/>
            <person name="Chen Z."/>
            <person name="Yuan Z.-H."/>
            <person name="Zhao G.-P."/>
            <person name="Qu D."/>
            <person name="Danchin A."/>
            <person name="Wen Y.-M."/>
        </authorList>
    </citation>
    <scope>NUCLEOTIDE SEQUENCE [LARGE SCALE GENOMIC DNA]</scope>
    <source>
        <strain>ATCC 12228 / FDA PCI 1200</strain>
    </source>
</reference>
<gene>
    <name type="primary">gapA2</name>
    <name type="synonym">gapB</name>
    <name type="ordered locus">SE_1361</name>
</gene>
<accession>Q8CNY0</accession>
<comment type="function">
    <text evidence="2">Catalyzes the oxidative phosphorylation of glyceraldehyde 3-phosphate (G3P) to 1,3-bisphosphoglycerate (BPG) using the cofactor NAD. The first reaction step involves the formation of a hemiacetal intermediate between G3P and a cysteine residue, and this hemiacetal intermediate is then oxidized to a thioester, with concomitant reduction of NAD to NADH. The reduced NADH is then exchanged with the second NAD, and the thioester is attacked by a nucleophilic inorganic phosphate to produce BPG.</text>
</comment>
<comment type="catalytic activity">
    <reaction evidence="2">
        <text>D-glyceraldehyde 3-phosphate + phosphate + NAD(+) = (2R)-3-phospho-glyceroyl phosphate + NADH + H(+)</text>
        <dbReference type="Rhea" id="RHEA:10300"/>
        <dbReference type="ChEBI" id="CHEBI:15378"/>
        <dbReference type="ChEBI" id="CHEBI:43474"/>
        <dbReference type="ChEBI" id="CHEBI:57540"/>
        <dbReference type="ChEBI" id="CHEBI:57604"/>
        <dbReference type="ChEBI" id="CHEBI:57945"/>
        <dbReference type="ChEBI" id="CHEBI:59776"/>
        <dbReference type="EC" id="1.2.1.12"/>
    </reaction>
</comment>
<comment type="pathway">
    <text evidence="3">Carbohydrate degradation; glycolysis; pyruvate from D-glyceraldehyde 3-phosphate: step 1/5.</text>
</comment>
<comment type="subunit">
    <text evidence="2">Homotetramer.</text>
</comment>
<comment type="subcellular location">
    <subcellularLocation>
        <location evidence="3">Cytoplasm</location>
    </subcellularLocation>
</comment>
<comment type="similarity">
    <text evidence="3">Belongs to the glyceraldehyde-3-phosphate dehydrogenase family.</text>
</comment>
<sequence length="341" mass="37092">MATNIAINGMGRIGRMVLRIALNNKNLNVKAINASYPPETIAHLLNYDTTHGVYDKKVEPIESGIKVNGHEIKLLSDRNPENLPWNEMDIDVVIEATGKFNHGDKAVAHINAGAKKVLLTGPSKGGDVQMIVKGVNDNQLDIDTYDIFSNASCTTNCIGPVAKVLNDKFGIINGLMTTVHAITNDQKNIDNPHKDLRRARSCNESIIPTSTGAAKALKEVLPEVEGKLHGMALRVPTKNVSLVDLVVDLEQNVTVTQVNDAFKNADLSGVLDVEEAPLVSVDFNTNPHSAIIDSQSTMVMGQNKVKVIAWYDNEWGYSNRVVEVAVKIGQLIDDKAMVKAI</sequence>